<proteinExistence type="evidence at transcript level"/>
<feature type="chain" id="PRO_0000448626" description="Transcription factor BHLH133">
    <location>
        <begin position="1"/>
        <end position="198"/>
    </location>
</feature>
<feature type="domain" description="bHLH" evidence="1">
    <location>
        <begin position="114"/>
        <end position="163"/>
    </location>
</feature>
<feature type="region of interest" description="Basic motif; degenerate" evidence="1">
    <location>
        <begin position="114"/>
        <end position="127"/>
    </location>
</feature>
<feature type="region of interest" description="Helix-loop-helix motif" evidence="1">
    <location>
        <begin position="128"/>
        <end position="163"/>
    </location>
</feature>
<dbReference type="EMBL" id="DP000011">
    <property type="protein sequence ID" value="ABA99018.1"/>
    <property type="molecule type" value="Genomic_DNA"/>
</dbReference>
<dbReference type="EMBL" id="AP014968">
    <property type="protein sequence ID" value="BAT17311.1"/>
    <property type="status" value="ALT_SEQ"/>
    <property type="molecule type" value="Genomic_DNA"/>
</dbReference>
<dbReference type="EMBL" id="CM000149">
    <property type="protein sequence ID" value="EAZ20626.1"/>
    <property type="molecule type" value="Genomic_DNA"/>
</dbReference>
<dbReference type="RefSeq" id="XP_015619477.1">
    <property type="nucleotide sequence ID" value="XM_015763991.1"/>
</dbReference>
<dbReference type="SMR" id="Q2QQ32"/>
<dbReference type="FunCoup" id="Q2QQ32">
    <property type="interactions" value="109"/>
</dbReference>
<dbReference type="STRING" id="39947.Q2QQ32"/>
<dbReference type="PaxDb" id="39947-Q2QQ32"/>
<dbReference type="EnsemblPlants" id="Os12t0508500-01">
    <property type="protein sequence ID" value="Os12t0508500-01"/>
    <property type="gene ID" value="Os12g0508500"/>
</dbReference>
<dbReference type="GeneID" id="107276670"/>
<dbReference type="Gramene" id="Os12t0508500-01">
    <property type="protein sequence ID" value="Os12t0508500-01"/>
    <property type="gene ID" value="Os12g0508500"/>
</dbReference>
<dbReference type="KEGG" id="osa:107276670"/>
<dbReference type="InParanoid" id="Q2QQ32"/>
<dbReference type="OrthoDB" id="651283at2759"/>
<dbReference type="Proteomes" id="UP000007752">
    <property type="component" value="Chromosome 12"/>
</dbReference>
<dbReference type="Proteomes" id="UP000059680">
    <property type="component" value="Chromosome 12"/>
</dbReference>
<dbReference type="GO" id="GO:0005634">
    <property type="term" value="C:nucleus"/>
    <property type="evidence" value="ECO:0000318"/>
    <property type="project" value="GO_Central"/>
</dbReference>
<dbReference type="GO" id="GO:0000981">
    <property type="term" value="F:DNA-binding transcription factor activity, RNA polymerase II-specific"/>
    <property type="evidence" value="ECO:0000318"/>
    <property type="project" value="GO_Central"/>
</dbReference>
<dbReference type="GO" id="GO:0046983">
    <property type="term" value="F:protein dimerization activity"/>
    <property type="evidence" value="ECO:0007669"/>
    <property type="project" value="InterPro"/>
</dbReference>
<dbReference type="GO" id="GO:0000978">
    <property type="term" value="F:RNA polymerase II cis-regulatory region sequence-specific DNA binding"/>
    <property type="evidence" value="ECO:0000318"/>
    <property type="project" value="GO_Central"/>
</dbReference>
<dbReference type="GO" id="GO:0006355">
    <property type="term" value="P:regulation of DNA-templated transcription"/>
    <property type="evidence" value="ECO:0000305"/>
    <property type="project" value="Gramene"/>
</dbReference>
<dbReference type="GO" id="GO:0006357">
    <property type="term" value="P:regulation of transcription by RNA polymerase II"/>
    <property type="evidence" value="ECO:0000318"/>
    <property type="project" value="GO_Central"/>
</dbReference>
<dbReference type="CDD" id="cd11454">
    <property type="entry name" value="bHLH_AtIND_like"/>
    <property type="match status" value="1"/>
</dbReference>
<dbReference type="FunFam" id="4.10.280.10:FF:000022">
    <property type="entry name" value="Basic helix-loop-helix transcription factor"/>
    <property type="match status" value="1"/>
</dbReference>
<dbReference type="Gene3D" id="4.10.280.10">
    <property type="entry name" value="Helix-loop-helix DNA-binding domain"/>
    <property type="match status" value="1"/>
</dbReference>
<dbReference type="InterPro" id="IPR011598">
    <property type="entry name" value="bHLH_dom"/>
</dbReference>
<dbReference type="InterPro" id="IPR036638">
    <property type="entry name" value="HLH_DNA-bd_sf"/>
</dbReference>
<dbReference type="InterPro" id="IPR045843">
    <property type="entry name" value="IND-like"/>
</dbReference>
<dbReference type="PANTHER" id="PTHR45914">
    <property type="entry name" value="TRANSCRIPTION FACTOR HEC3-RELATED"/>
    <property type="match status" value="1"/>
</dbReference>
<dbReference type="PANTHER" id="PTHR45914:SF60">
    <property type="entry name" value="TRANSCRIPTION FACTOR RSL2-LIKE"/>
    <property type="match status" value="1"/>
</dbReference>
<dbReference type="Pfam" id="PF00010">
    <property type="entry name" value="HLH"/>
    <property type="match status" value="1"/>
</dbReference>
<dbReference type="SMART" id="SM00353">
    <property type="entry name" value="HLH"/>
    <property type="match status" value="1"/>
</dbReference>
<dbReference type="SUPFAM" id="SSF47459">
    <property type="entry name" value="HLH, helix-loop-helix DNA-binding domain"/>
    <property type="match status" value="1"/>
</dbReference>
<dbReference type="PROSITE" id="PS50888">
    <property type="entry name" value="BHLH"/>
    <property type="match status" value="1"/>
</dbReference>
<name>BH133_ORYSJ</name>
<organism>
    <name type="scientific">Oryza sativa subsp. japonica</name>
    <name type="common">Rice</name>
    <dbReference type="NCBI Taxonomy" id="39947"/>
    <lineage>
        <taxon>Eukaryota</taxon>
        <taxon>Viridiplantae</taxon>
        <taxon>Streptophyta</taxon>
        <taxon>Embryophyta</taxon>
        <taxon>Tracheophyta</taxon>
        <taxon>Spermatophyta</taxon>
        <taxon>Magnoliopsida</taxon>
        <taxon>Liliopsida</taxon>
        <taxon>Poales</taxon>
        <taxon>Poaceae</taxon>
        <taxon>BOP clade</taxon>
        <taxon>Oryzoideae</taxon>
        <taxon>Oryzeae</taxon>
        <taxon>Oryzinae</taxon>
        <taxon>Oryza</taxon>
        <taxon>Oryza sativa</taxon>
    </lineage>
</organism>
<protein>
    <recommendedName>
        <fullName evidence="4">Transcription factor BHLH133</fullName>
    </recommendedName>
    <alternativeName>
        <fullName evidence="3">Basic helix-loop-helix protein 133</fullName>
        <shortName evidence="3">OsbHLH133</shortName>
    </alternativeName>
    <alternativeName>
        <fullName evidence="4">bHLH transcription factor bHLH133</fullName>
    </alternativeName>
</protein>
<gene>
    <name evidence="3" type="primary">BHLH133</name>
    <name evidence="6" type="ordered locus">Os12g0508500</name>
    <name evidence="5" type="ordered locus">LOC_Os12g32400</name>
    <name evidence="7" type="ORF">OsJ_36241</name>
</gene>
<evidence type="ECO:0000255" key="1">
    <source>
        <dbReference type="PROSITE-ProRule" id="PRU00981"/>
    </source>
</evidence>
<evidence type="ECO:0000269" key="2">
    <source>
    </source>
</evidence>
<evidence type="ECO:0000303" key="3">
    <source>
    </source>
</evidence>
<evidence type="ECO:0000305" key="4"/>
<evidence type="ECO:0000312" key="5">
    <source>
        <dbReference type="EMBL" id="ABA99018.1"/>
    </source>
</evidence>
<evidence type="ECO:0000312" key="6">
    <source>
        <dbReference type="EMBL" id="BAT17311.1"/>
    </source>
</evidence>
<evidence type="ECO:0000312" key="7">
    <source>
        <dbReference type="EMBL" id="EAZ20626.1"/>
    </source>
</evidence>
<sequence length="198" mass="22598">MECSSFEAICNESEMIAHLQSLFWSSSDADPCFGSSSFSLISSEGYDTMTTEFVNSSTNVCFDYQDDSFVSAEETTIGNKRKVQMDTENELMTNRSKEVRTKMSVSKACKHSVSAESSQSYYAKNRRQRINERLRILQELIPNGTKVDISTMLEEAIQYVKFLHLQIKLLSSDEMWMYAPLAFDSGNNRLYQNSLSQE</sequence>
<reference key="1">
    <citation type="journal article" date="2005" name="BMC Biol.">
        <title>The sequence of rice chromosomes 11 and 12, rich in disease resistance genes and recent gene duplications.</title>
        <authorList>
            <consortium name="The rice chromosomes 11 and 12 sequencing consortia"/>
        </authorList>
    </citation>
    <scope>NUCLEOTIDE SEQUENCE [LARGE SCALE GENOMIC DNA]</scope>
    <source>
        <strain>cv. Nipponbare</strain>
    </source>
</reference>
<reference key="2">
    <citation type="journal article" date="2005" name="Nature">
        <title>The map-based sequence of the rice genome.</title>
        <authorList>
            <consortium name="International rice genome sequencing project (IRGSP)"/>
        </authorList>
    </citation>
    <scope>NUCLEOTIDE SEQUENCE [LARGE SCALE GENOMIC DNA]</scope>
    <source>
        <strain>cv. Nipponbare</strain>
    </source>
</reference>
<reference key="3">
    <citation type="journal article" date="2013" name="Rice">
        <title>Improvement of the Oryza sativa Nipponbare reference genome using next generation sequence and optical map data.</title>
        <authorList>
            <person name="Kawahara Y."/>
            <person name="de la Bastide M."/>
            <person name="Hamilton J.P."/>
            <person name="Kanamori H."/>
            <person name="McCombie W.R."/>
            <person name="Ouyang S."/>
            <person name="Schwartz D.C."/>
            <person name="Tanaka T."/>
            <person name="Wu J."/>
            <person name="Zhou S."/>
            <person name="Childs K.L."/>
            <person name="Davidson R.M."/>
            <person name="Lin H."/>
            <person name="Quesada-Ocampo L."/>
            <person name="Vaillancourt B."/>
            <person name="Sakai H."/>
            <person name="Lee S.S."/>
            <person name="Kim J."/>
            <person name="Numa H."/>
            <person name="Itoh T."/>
            <person name="Buell C.R."/>
            <person name="Matsumoto T."/>
        </authorList>
    </citation>
    <scope>GENOME REANNOTATION</scope>
    <source>
        <strain>cv. Nipponbare</strain>
    </source>
</reference>
<reference key="4">
    <citation type="journal article" date="2005" name="PLoS Biol.">
        <title>The genomes of Oryza sativa: a history of duplications.</title>
        <authorList>
            <person name="Yu J."/>
            <person name="Wang J."/>
            <person name="Lin W."/>
            <person name="Li S."/>
            <person name="Li H."/>
            <person name="Zhou J."/>
            <person name="Ni P."/>
            <person name="Dong W."/>
            <person name="Hu S."/>
            <person name="Zeng C."/>
            <person name="Zhang J."/>
            <person name="Zhang Y."/>
            <person name="Li R."/>
            <person name="Xu Z."/>
            <person name="Li S."/>
            <person name="Li X."/>
            <person name="Zheng H."/>
            <person name="Cong L."/>
            <person name="Lin L."/>
            <person name="Yin J."/>
            <person name="Geng J."/>
            <person name="Li G."/>
            <person name="Shi J."/>
            <person name="Liu J."/>
            <person name="Lv H."/>
            <person name="Li J."/>
            <person name="Wang J."/>
            <person name="Deng Y."/>
            <person name="Ran L."/>
            <person name="Shi X."/>
            <person name="Wang X."/>
            <person name="Wu Q."/>
            <person name="Li C."/>
            <person name="Ren X."/>
            <person name="Wang J."/>
            <person name="Wang X."/>
            <person name="Li D."/>
            <person name="Liu D."/>
            <person name="Zhang X."/>
            <person name="Ji Z."/>
            <person name="Zhao W."/>
            <person name="Sun Y."/>
            <person name="Zhang Z."/>
            <person name="Bao J."/>
            <person name="Han Y."/>
            <person name="Dong L."/>
            <person name="Ji J."/>
            <person name="Chen P."/>
            <person name="Wu S."/>
            <person name="Liu J."/>
            <person name="Xiao Y."/>
            <person name="Bu D."/>
            <person name="Tan J."/>
            <person name="Yang L."/>
            <person name="Ye C."/>
            <person name="Zhang J."/>
            <person name="Xu J."/>
            <person name="Zhou Y."/>
            <person name="Yu Y."/>
            <person name="Zhang B."/>
            <person name="Zhuang S."/>
            <person name="Wei H."/>
            <person name="Liu B."/>
            <person name="Lei M."/>
            <person name="Yu H."/>
            <person name="Li Y."/>
            <person name="Xu H."/>
            <person name="Wei S."/>
            <person name="He X."/>
            <person name="Fang L."/>
            <person name="Zhang Z."/>
            <person name="Zhang Y."/>
            <person name="Huang X."/>
            <person name="Su Z."/>
            <person name="Tong W."/>
            <person name="Li J."/>
            <person name="Tong Z."/>
            <person name="Li S."/>
            <person name="Ye J."/>
            <person name="Wang L."/>
            <person name="Fang L."/>
            <person name="Lei T."/>
            <person name="Chen C.-S."/>
            <person name="Chen H.-C."/>
            <person name="Xu Z."/>
            <person name="Li H."/>
            <person name="Huang H."/>
            <person name="Zhang F."/>
            <person name="Xu H."/>
            <person name="Li N."/>
            <person name="Zhao C."/>
            <person name="Li S."/>
            <person name="Dong L."/>
            <person name="Huang Y."/>
            <person name="Li L."/>
            <person name="Xi Y."/>
            <person name="Qi Q."/>
            <person name="Li W."/>
            <person name="Zhang B."/>
            <person name="Hu W."/>
            <person name="Zhang Y."/>
            <person name="Tian X."/>
            <person name="Jiao Y."/>
            <person name="Liang X."/>
            <person name="Jin J."/>
            <person name="Gao L."/>
            <person name="Zheng W."/>
            <person name="Hao B."/>
            <person name="Liu S.-M."/>
            <person name="Wang W."/>
            <person name="Yuan L."/>
            <person name="Cao M."/>
            <person name="McDermott J."/>
            <person name="Samudrala R."/>
            <person name="Wang J."/>
            <person name="Wong G.K.-S."/>
            <person name="Yang H."/>
        </authorList>
    </citation>
    <scope>NUCLEOTIDE SEQUENCE [LARGE SCALE GENOMIC DNA]</scope>
    <source>
        <strain>cv. Nipponbare</strain>
    </source>
</reference>
<reference key="5">
    <citation type="journal article" date="2006" name="Plant Physiol.">
        <title>Genome-wide analysis of basic/helix-loop-helix transcription factor family in rice and Arabidopsis.</title>
        <authorList>
            <person name="Li X."/>
            <person name="Duan X."/>
            <person name="Jiang H."/>
            <person name="Sun Y."/>
            <person name="Tang Y."/>
            <person name="Yuan Z."/>
            <person name="Guo J."/>
            <person name="Liang W."/>
            <person name="Chen L."/>
            <person name="Yin J."/>
            <person name="Ma H."/>
            <person name="Wang J."/>
            <person name="Zhang D."/>
        </authorList>
    </citation>
    <scope>GENE FAMILY</scope>
    <scope>NOMENCLATURE</scope>
</reference>
<reference key="6">
    <citation type="journal article" date="2013" name="Plant Cell Environ.">
        <title>Identification of OsbHLH133 as a regulator of iron distribution between roots and shoots in Oryza sativa.</title>
        <authorList>
            <person name="Wang L."/>
            <person name="Ying Y."/>
            <person name="Narsai R."/>
            <person name="Ye L."/>
            <person name="Zheng L."/>
            <person name="Tian J."/>
            <person name="Whelan J."/>
            <person name="Shou H."/>
        </authorList>
    </citation>
    <scope>FUNCTION</scope>
    <scope>SUBCELLULAR LOCATION</scope>
    <scope>INDUCTION BY IRON DEIFICIENCY</scope>
    <scope>DISRUPTION PHENOTYPE</scope>
</reference>
<keyword id="KW-0238">DNA-binding</keyword>
<keyword id="KW-0539">Nucleus</keyword>
<keyword id="KW-1185">Reference proteome</keyword>
<keyword id="KW-0346">Stress response</keyword>
<keyword id="KW-0804">Transcription</keyword>
<keyword id="KW-0805">Transcription regulation</keyword>
<accession>Q2QQ32</accession>
<accession>A0A0P0YAL5</accession>
<comment type="function">
    <text evidence="2">Transcription factor that acts as a regulator of iron homeostasis (PubMed:22755510). May act as negative regulator of iron transportation from root to shoot (PubMed:22755510). Does not seem to be involved in the suppression of the induction of iron deficiency responsive genes (PubMed:22755510).</text>
</comment>
<comment type="subcellular location">
    <subcellularLocation>
        <location evidence="1 2">Nucleus</location>
    </subcellularLocation>
</comment>
<comment type="induction">
    <text evidence="2">Strongly induced by iron deficiency in roots (PubMed:22755510). Slightly induced in shoots (PubMed:22755510).</text>
</comment>
<comment type="disruption phenotype">
    <text evidence="2">Slight reduction of shoot length and 2-fold reduction of seed set.</text>
</comment>
<comment type="miscellaneous">
    <text evidence="2">Plants overexpressing BHLH133 are hypersensitive to iron deficiency.</text>
</comment>
<comment type="similarity">
    <text evidence="4">Belongs to the bHLH protein family.</text>
</comment>
<comment type="sequence caution" evidence="4">
    <conflict type="erroneous gene model prediction">
        <sequence resource="EMBL-CDS" id="BAT17311"/>
    </conflict>
</comment>